<reference key="1">
    <citation type="submission" date="2006-10" db="EMBL/GenBank/DDBJ databases">
        <authorList>
            <person name="Fleischmann R.D."/>
            <person name="Dodson R.J."/>
            <person name="Haft D.H."/>
            <person name="Merkel J.S."/>
            <person name="Nelson W.C."/>
            <person name="Fraser C.M."/>
        </authorList>
    </citation>
    <scope>NUCLEOTIDE SEQUENCE [LARGE SCALE GENOMIC DNA]</scope>
    <source>
        <strain>104</strain>
    </source>
</reference>
<organism>
    <name type="scientific">Mycobacterium avium (strain 104)</name>
    <dbReference type="NCBI Taxonomy" id="243243"/>
    <lineage>
        <taxon>Bacteria</taxon>
        <taxon>Bacillati</taxon>
        <taxon>Actinomycetota</taxon>
        <taxon>Actinomycetes</taxon>
        <taxon>Mycobacteriales</taxon>
        <taxon>Mycobacteriaceae</taxon>
        <taxon>Mycobacterium</taxon>
        <taxon>Mycobacterium avium complex (MAC)</taxon>
    </lineage>
</organism>
<proteinExistence type="inferred from homology"/>
<sequence>MTAPLELEQIRKAPKALLHDHLDGGLRPSTVLDIAGQTGYDGLPATDVEELATWFRTRSHSGSLERYLEPFSHTVAVMQTPEALHRVAYECVEDLAEDSVVYAEIRFAPELHINRGMSFDEIVDAVLAGFADGEKACAAAGRPIVVRLLVTAMRHAAVSREIAELAIRWRDKGVVGFDIAGAEAGNPPTRHLEAFDYMRDHNARFTIHAGEAFGLPSIHEAIAFCGADRLGHGVRIVDDIDVLADGPDKGKVRLGRLANILRDKRIPLELCPSSNVQTGAVKSIADHPFDLLARTRFRVTVNTDNRLMSDTYMSREMHRLVQAFGYGWSDLERFTINAMKSAFIPFDERLAIIDEVIKPRYAVLIG</sequence>
<accession>A0QKJ4</accession>
<keyword id="KW-0378">Hydrolase</keyword>
<keyword id="KW-0479">Metal-binding</keyword>
<keyword id="KW-0546">Nucleotide metabolism</keyword>
<keyword id="KW-0862">Zinc</keyword>
<evidence type="ECO:0000255" key="1">
    <source>
        <dbReference type="HAMAP-Rule" id="MF_00540"/>
    </source>
</evidence>
<feature type="chain" id="PRO_1000017667" description="Adenosine deaminase">
    <location>
        <begin position="1"/>
        <end position="366"/>
    </location>
</feature>
<feature type="active site" description="Proton donor" evidence="1">
    <location>
        <position position="211"/>
    </location>
</feature>
<feature type="binding site" evidence="1">
    <location>
        <position position="19"/>
    </location>
    <ligand>
        <name>Zn(2+)</name>
        <dbReference type="ChEBI" id="CHEBI:29105"/>
        <note>catalytic</note>
    </ligand>
</feature>
<feature type="binding site" evidence="1">
    <location>
        <position position="21"/>
    </location>
    <ligand>
        <name>substrate</name>
    </ligand>
</feature>
<feature type="binding site" evidence="1">
    <location>
        <position position="21"/>
    </location>
    <ligand>
        <name>Zn(2+)</name>
        <dbReference type="ChEBI" id="CHEBI:29105"/>
        <note>catalytic</note>
    </ligand>
</feature>
<feature type="binding site" evidence="1">
    <location>
        <position position="23"/>
    </location>
    <ligand>
        <name>substrate</name>
    </ligand>
</feature>
<feature type="binding site" evidence="1">
    <location>
        <position position="181"/>
    </location>
    <ligand>
        <name>substrate</name>
    </ligand>
</feature>
<feature type="binding site" evidence="1">
    <location>
        <position position="208"/>
    </location>
    <ligand>
        <name>Zn(2+)</name>
        <dbReference type="ChEBI" id="CHEBI:29105"/>
        <note>catalytic</note>
    </ligand>
</feature>
<feature type="binding site" evidence="1">
    <location>
        <position position="304"/>
    </location>
    <ligand>
        <name>Zn(2+)</name>
        <dbReference type="ChEBI" id="CHEBI:29105"/>
        <note>catalytic</note>
    </ligand>
</feature>
<feature type="site" description="Important for catalytic activity" evidence="1">
    <location>
        <position position="232"/>
    </location>
</feature>
<comment type="function">
    <text evidence="1">Catalyzes the hydrolytic deamination of adenosine and 2-deoxyadenosine.</text>
</comment>
<comment type="catalytic activity">
    <reaction evidence="1">
        <text>adenosine + H2O + H(+) = inosine + NH4(+)</text>
        <dbReference type="Rhea" id="RHEA:24408"/>
        <dbReference type="ChEBI" id="CHEBI:15377"/>
        <dbReference type="ChEBI" id="CHEBI:15378"/>
        <dbReference type="ChEBI" id="CHEBI:16335"/>
        <dbReference type="ChEBI" id="CHEBI:17596"/>
        <dbReference type="ChEBI" id="CHEBI:28938"/>
        <dbReference type="EC" id="3.5.4.4"/>
    </reaction>
    <physiologicalReaction direction="left-to-right" evidence="1">
        <dbReference type="Rhea" id="RHEA:24409"/>
    </physiologicalReaction>
</comment>
<comment type="catalytic activity">
    <reaction evidence="1">
        <text>2'-deoxyadenosine + H2O + H(+) = 2'-deoxyinosine + NH4(+)</text>
        <dbReference type="Rhea" id="RHEA:28190"/>
        <dbReference type="ChEBI" id="CHEBI:15377"/>
        <dbReference type="ChEBI" id="CHEBI:15378"/>
        <dbReference type="ChEBI" id="CHEBI:17256"/>
        <dbReference type="ChEBI" id="CHEBI:28938"/>
        <dbReference type="ChEBI" id="CHEBI:28997"/>
        <dbReference type="EC" id="3.5.4.4"/>
    </reaction>
    <physiologicalReaction direction="left-to-right" evidence="1">
        <dbReference type="Rhea" id="RHEA:28191"/>
    </physiologicalReaction>
</comment>
<comment type="cofactor">
    <cofactor evidence="1">
        <name>Zn(2+)</name>
        <dbReference type="ChEBI" id="CHEBI:29105"/>
    </cofactor>
    <text evidence="1">Binds 1 zinc ion per subunit.</text>
</comment>
<comment type="similarity">
    <text evidence="1">Belongs to the metallo-dependent hydrolases superfamily. Adenosine and AMP deaminases family. Adenosine deaminase subfamily.</text>
</comment>
<protein>
    <recommendedName>
        <fullName evidence="1">Adenosine deaminase</fullName>
        <ecNumber evidence="1">3.5.4.4</ecNumber>
    </recommendedName>
    <alternativeName>
        <fullName evidence="1">Adenosine aminohydrolase</fullName>
    </alternativeName>
</protein>
<dbReference type="EC" id="3.5.4.4" evidence="1"/>
<dbReference type="EMBL" id="CP000479">
    <property type="protein sequence ID" value="ABK68515.1"/>
    <property type="molecule type" value="Genomic_DNA"/>
</dbReference>
<dbReference type="RefSeq" id="WP_009978822.1">
    <property type="nucleotide sequence ID" value="NC_008595.1"/>
</dbReference>
<dbReference type="SMR" id="A0QKJ4"/>
<dbReference type="KEGG" id="mav:MAV_4294"/>
<dbReference type="HOGENOM" id="CLU_039228_0_0_11"/>
<dbReference type="Proteomes" id="UP000001574">
    <property type="component" value="Chromosome"/>
</dbReference>
<dbReference type="GO" id="GO:0005829">
    <property type="term" value="C:cytosol"/>
    <property type="evidence" value="ECO:0007669"/>
    <property type="project" value="TreeGrafter"/>
</dbReference>
<dbReference type="GO" id="GO:0046936">
    <property type="term" value="F:2'-deoxyadenosine deaminase activity"/>
    <property type="evidence" value="ECO:0007669"/>
    <property type="project" value="RHEA"/>
</dbReference>
<dbReference type="GO" id="GO:0004000">
    <property type="term" value="F:adenosine deaminase activity"/>
    <property type="evidence" value="ECO:0007669"/>
    <property type="project" value="UniProtKB-UniRule"/>
</dbReference>
<dbReference type="GO" id="GO:0008270">
    <property type="term" value="F:zinc ion binding"/>
    <property type="evidence" value="ECO:0007669"/>
    <property type="project" value="UniProtKB-UniRule"/>
</dbReference>
<dbReference type="GO" id="GO:0006154">
    <property type="term" value="P:adenosine catabolic process"/>
    <property type="evidence" value="ECO:0007669"/>
    <property type="project" value="TreeGrafter"/>
</dbReference>
<dbReference type="GO" id="GO:0043103">
    <property type="term" value="P:hypoxanthine salvage"/>
    <property type="evidence" value="ECO:0007669"/>
    <property type="project" value="TreeGrafter"/>
</dbReference>
<dbReference type="GO" id="GO:0046103">
    <property type="term" value="P:inosine biosynthetic process"/>
    <property type="evidence" value="ECO:0007669"/>
    <property type="project" value="TreeGrafter"/>
</dbReference>
<dbReference type="GO" id="GO:0009117">
    <property type="term" value="P:nucleotide metabolic process"/>
    <property type="evidence" value="ECO:0007669"/>
    <property type="project" value="UniProtKB-KW"/>
</dbReference>
<dbReference type="GO" id="GO:0009168">
    <property type="term" value="P:purine ribonucleoside monophosphate biosynthetic process"/>
    <property type="evidence" value="ECO:0007669"/>
    <property type="project" value="UniProtKB-UniRule"/>
</dbReference>
<dbReference type="FunFam" id="3.20.20.140:FF:000020">
    <property type="entry name" value="Adenosine deaminase"/>
    <property type="match status" value="1"/>
</dbReference>
<dbReference type="Gene3D" id="3.20.20.140">
    <property type="entry name" value="Metal-dependent hydrolases"/>
    <property type="match status" value="1"/>
</dbReference>
<dbReference type="HAMAP" id="MF_00540">
    <property type="entry name" value="A_deaminase"/>
    <property type="match status" value="1"/>
</dbReference>
<dbReference type="InterPro" id="IPR028893">
    <property type="entry name" value="A_deaminase"/>
</dbReference>
<dbReference type="InterPro" id="IPR001365">
    <property type="entry name" value="A_deaminase_dom"/>
</dbReference>
<dbReference type="InterPro" id="IPR006330">
    <property type="entry name" value="Ado/ade_deaminase"/>
</dbReference>
<dbReference type="InterPro" id="IPR032466">
    <property type="entry name" value="Metal_Hydrolase"/>
</dbReference>
<dbReference type="NCBIfam" id="TIGR01430">
    <property type="entry name" value="aden_deam"/>
    <property type="match status" value="1"/>
</dbReference>
<dbReference type="NCBIfam" id="NF006847">
    <property type="entry name" value="PRK09358.1-2"/>
    <property type="match status" value="1"/>
</dbReference>
<dbReference type="PANTHER" id="PTHR11409">
    <property type="entry name" value="ADENOSINE DEAMINASE"/>
    <property type="match status" value="1"/>
</dbReference>
<dbReference type="PANTHER" id="PTHR11409:SF43">
    <property type="entry name" value="ADENOSINE DEAMINASE"/>
    <property type="match status" value="1"/>
</dbReference>
<dbReference type="Pfam" id="PF00962">
    <property type="entry name" value="A_deaminase"/>
    <property type="match status" value="1"/>
</dbReference>
<dbReference type="SUPFAM" id="SSF51556">
    <property type="entry name" value="Metallo-dependent hydrolases"/>
    <property type="match status" value="1"/>
</dbReference>
<gene>
    <name evidence="1" type="primary">add</name>
    <name type="ordered locus">MAV_4294</name>
</gene>
<name>ADD_MYCA1</name>